<accession>Q5SML4</accession>
<organism>
    <name type="scientific">Oryza sativa subsp. japonica</name>
    <name type="common">Rice</name>
    <dbReference type="NCBI Taxonomy" id="39947"/>
    <lineage>
        <taxon>Eukaryota</taxon>
        <taxon>Viridiplantae</taxon>
        <taxon>Streptophyta</taxon>
        <taxon>Embryophyta</taxon>
        <taxon>Tracheophyta</taxon>
        <taxon>Spermatophyta</taxon>
        <taxon>Magnoliopsida</taxon>
        <taxon>Liliopsida</taxon>
        <taxon>Poales</taxon>
        <taxon>Poaceae</taxon>
        <taxon>BOP clade</taxon>
        <taxon>Oryzoideae</taxon>
        <taxon>Oryzeae</taxon>
        <taxon>Oryzinae</taxon>
        <taxon>Oryza</taxon>
        <taxon>Oryza sativa</taxon>
    </lineage>
</organism>
<reference key="1">
    <citation type="journal article" date="2006" name="Gene">
        <title>Identification and characterization of cytokinin-signalling gene families in rice.</title>
        <authorList>
            <person name="Ito Y."/>
            <person name="Kurata N."/>
        </authorList>
    </citation>
    <scope>NUCLEOTIDE SEQUENCE [GENOMIC DNA]</scope>
    <scope>TISSUE SPECIFICITY</scope>
    <source>
        <strain>cv. Nipponbare</strain>
    </source>
</reference>
<reference key="2">
    <citation type="journal article" date="2005" name="Nature">
        <title>The map-based sequence of the rice genome.</title>
        <authorList>
            <consortium name="International rice genome sequencing project (IRGSP)"/>
        </authorList>
    </citation>
    <scope>NUCLEOTIDE SEQUENCE [LARGE SCALE GENOMIC DNA]</scope>
    <source>
        <strain>cv. Nipponbare</strain>
    </source>
</reference>
<reference key="3">
    <citation type="journal article" date="2008" name="Nucleic Acids Res.">
        <title>The rice annotation project database (RAP-DB): 2008 update.</title>
        <authorList>
            <consortium name="The rice annotation project (RAP)"/>
        </authorList>
    </citation>
    <scope>GENOME REANNOTATION</scope>
    <source>
        <strain>cv. Nipponbare</strain>
    </source>
</reference>
<reference key="4">
    <citation type="journal article" date="2013" name="Rice">
        <title>Improvement of the Oryza sativa Nipponbare reference genome using next generation sequence and optical map data.</title>
        <authorList>
            <person name="Kawahara Y."/>
            <person name="de la Bastide M."/>
            <person name="Hamilton J.P."/>
            <person name="Kanamori H."/>
            <person name="McCombie W.R."/>
            <person name="Ouyang S."/>
            <person name="Schwartz D.C."/>
            <person name="Tanaka T."/>
            <person name="Wu J."/>
            <person name="Zhou S."/>
            <person name="Childs K.L."/>
            <person name="Davidson R.M."/>
            <person name="Lin H."/>
            <person name="Quesada-Ocampo L."/>
            <person name="Vaillancourt B."/>
            <person name="Sakai H."/>
            <person name="Lee S.S."/>
            <person name="Kim J."/>
            <person name="Numa H."/>
            <person name="Itoh T."/>
            <person name="Buell C.R."/>
            <person name="Matsumoto T."/>
        </authorList>
    </citation>
    <scope>GENOME REANNOTATION</scope>
    <source>
        <strain>cv. Nipponbare</strain>
    </source>
</reference>
<reference key="5">
    <citation type="journal article" date="2006" name="Plant Physiol.">
        <title>Whole-genome analysis of Oryza sativa reveals similar architecture of two-component signaling machinery with Arabidopsis.</title>
        <authorList>
            <person name="Pareek A."/>
            <person name="Singh A."/>
            <person name="Kumar M."/>
            <person name="Kushwaha H.R."/>
            <person name="Lynn A.M."/>
            <person name="Singla-Pareek S.L."/>
        </authorList>
    </citation>
    <scope>DISRUPTION PHENOTYPE</scope>
</reference>
<reference key="6">
    <citation type="journal article" date="2007" name="Plant Physiol.">
        <title>Nomenclature for two-component signaling elements of rice.</title>
        <authorList>
            <person name="Schaller G.E."/>
            <person name="Doi K."/>
            <person name="Hwang I."/>
            <person name="Kieber J.J."/>
            <person name="Khurana J.P."/>
            <person name="Kurata N."/>
            <person name="Mizuno T."/>
            <person name="Pareek A."/>
            <person name="Shiu S.H."/>
            <person name="Wu P."/>
            <person name="Yip W.K."/>
        </authorList>
    </citation>
    <scope>GENE FAMILY</scope>
    <scope>NOMENCLATURE</scope>
</reference>
<comment type="function">
    <text evidence="1">Cytokinin receptor related to bacterial two-component regulators. Functions as a histidine kinase and transmits the stress signal to a downstream MAPK cascade.</text>
</comment>
<comment type="catalytic activity">
    <reaction evidence="10">
        <text>ATP + protein L-histidine = ADP + protein N-phospho-L-histidine.</text>
        <dbReference type="EC" id="2.7.13.3"/>
    </reaction>
</comment>
<comment type="subcellular location">
    <subcellularLocation>
        <location evidence="10">Cell membrane</location>
        <topology evidence="2">Multi-pass membrane protein</topology>
    </subcellularLocation>
</comment>
<comment type="tissue specificity">
    <text evidence="6">Expressed in roots, leaf blades, leaf sheaths, shoot apex, flowers and panicles.</text>
</comment>
<comment type="domain">
    <text evidence="10">Histidine-containing phosphotransfer domain (HPt) contains an active histidine that mediates the phosphotransfer.</text>
</comment>
<comment type="PTM">
    <text evidence="10">Activation probably requires a transfer of a phosphate group between a His in the transmitter domain and an Asp of the receiver domain.</text>
</comment>
<comment type="disruption phenotype">
    <text evidence="5">Sterility.</text>
</comment>
<gene>
    <name evidence="9" type="primary">HK2</name>
    <name evidence="8" type="synonym">OHK1</name>
    <name evidence="11" type="ordered locus">Os06g0183200</name>
    <name evidence="10" type="ordered locus">LOC_Os06g08450</name>
    <name evidence="12" type="ORF">OSJNBb0036B04.16</name>
</gene>
<evidence type="ECO:0000250" key="1">
    <source>
        <dbReference type="UniProtKB" id="A1A698"/>
    </source>
</evidence>
<evidence type="ECO:0000255" key="2"/>
<evidence type="ECO:0000255" key="3">
    <source>
        <dbReference type="PROSITE-ProRule" id="PRU00107"/>
    </source>
</evidence>
<evidence type="ECO:0000255" key="4">
    <source>
        <dbReference type="PROSITE-ProRule" id="PRU00169"/>
    </source>
</evidence>
<evidence type="ECO:0000269" key="5">
    <source>
    </source>
</evidence>
<evidence type="ECO:0000269" key="6">
    <source>
    </source>
</evidence>
<evidence type="ECO:0000303" key="7">
    <source>
    </source>
</evidence>
<evidence type="ECO:0000303" key="8">
    <source>
    </source>
</evidence>
<evidence type="ECO:0000303" key="9">
    <source>
    </source>
</evidence>
<evidence type="ECO:0000305" key="10"/>
<evidence type="ECO:0000312" key="11">
    <source>
        <dbReference type="EMBL" id="AP008212"/>
    </source>
</evidence>
<evidence type="ECO:0000312" key="12">
    <source>
        <dbReference type="EMBL" id="BAD72542.1"/>
    </source>
</evidence>
<dbReference type="EC" id="2.7.13.3" evidence="10"/>
<dbReference type="EMBL" id="BR000243">
    <property type="protein sequence ID" value="FAA00247.1"/>
    <property type="molecule type" value="Genomic_DNA"/>
</dbReference>
<dbReference type="EMBL" id="AP007226">
    <property type="protein sequence ID" value="BAD72542.1"/>
    <property type="molecule type" value="Genomic_DNA"/>
</dbReference>
<dbReference type="EMBL" id="AP008212">
    <property type="status" value="NOT_ANNOTATED_CDS"/>
    <property type="molecule type" value="Genomic_DNA"/>
</dbReference>
<dbReference type="EMBL" id="AP014962">
    <property type="status" value="NOT_ANNOTATED_CDS"/>
    <property type="molecule type" value="Genomic_DNA"/>
</dbReference>
<dbReference type="SMR" id="Q5SML4"/>
<dbReference type="FunCoup" id="Q5SML4">
    <property type="interactions" value="24"/>
</dbReference>
<dbReference type="STRING" id="39947.Q5SML4"/>
<dbReference type="PaxDb" id="39947-Q5SML4"/>
<dbReference type="EnsemblPlants" id="Os06t0183200-01">
    <property type="protein sequence ID" value="Os06t0183200-01"/>
    <property type="gene ID" value="Os06g0183200"/>
</dbReference>
<dbReference type="Gramene" id="Os06t0183200-01">
    <property type="protein sequence ID" value="Os06t0183200-01"/>
    <property type="gene ID" value="Os06g0183200"/>
</dbReference>
<dbReference type="eggNOG" id="KOG0519">
    <property type="taxonomic scope" value="Eukaryota"/>
</dbReference>
<dbReference type="HOGENOM" id="CLU_000445_104_16_1"/>
<dbReference type="InParanoid" id="Q5SML4"/>
<dbReference type="Proteomes" id="UP000000763">
    <property type="component" value="Chromosome 6"/>
</dbReference>
<dbReference type="Proteomes" id="UP000059680">
    <property type="component" value="Chromosome 6"/>
</dbReference>
<dbReference type="GO" id="GO:0005886">
    <property type="term" value="C:plasma membrane"/>
    <property type="evidence" value="ECO:0000318"/>
    <property type="project" value="GO_Central"/>
</dbReference>
<dbReference type="GO" id="GO:0009927">
    <property type="term" value="F:histidine phosphotransfer kinase activity"/>
    <property type="evidence" value="ECO:0000318"/>
    <property type="project" value="GO_Central"/>
</dbReference>
<dbReference type="GO" id="GO:0000155">
    <property type="term" value="F:phosphorelay sensor kinase activity"/>
    <property type="evidence" value="ECO:0000318"/>
    <property type="project" value="GO_Central"/>
</dbReference>
<dbReference type="GO" id="GO:0009736">
    <property type="term" value="P:cytokinin-activated signaling pathway"/>
    <property type="evidence" value="ECO:0007669"/>
    <property type="project" value="UniProtKB-KW"/>
</dbReference>
<dbReference type="GO" id="GO:0000160">
    <property type="term" value="P:phosphorelay signal transduction system"/>
    <property type="evidence" value="ECO:0000318"/>
    <property type="project" value="GO_Central"/>
</dbReference>
<dbReference type="CDD" id="cd00082">
    <property type="entry name" value="HisKA"/>
    <property type="match status" value="1"/>
</dbReference>
<dbReference type="CDD" id="cd17546">
    <property type="entry name" value="REC_hyHK_CKI1_RcsC-like"/>
    <property type="match status" value="1"/>
</dbReference>
<dbReference type="FunFam" id="3.40.50.2300:FF:000367">
    <property type="entry name" value="Histidine kinase 1"/>
    <property type="match status" value="1"/>
</dbReference>
<dbReference type="Gene3D" id="1.10.287.130">
    <property type="match status" value="1"/>
</dbReference>
<dbReference type="Gene3D" id="3.40.50.2300">
    <property type="match status" value="1"/>
</dbReference>
<dbReference type="Gene3D" id="3.30.565.10">
    <property type="entry name" value="Histidine kinase-like ATPase, C-terminal domain"/>
    <property type="match status" value="1"/>
</dbReference>
<dbReference type="InterPro" id="IPR050956">
    <property type="entry name" value="2C_system_His_kinase"/>
</dbReference>
<dbReference type="InterPro" id="IPR011006">
    <property type="entry name" value="CheY-like_superfamily"/>
</dbReference>
<dbReference type="InterPro" id="IPR036890">
    <property type="entry name" value="HATPase_C_sf"/>
</dbReference>
<dbReference type="InterPro" id="IPR005467">
    <property type="entry name" value="His_kinase_dom"/>
</dbReference>
<dbReference type="InterPro" id="IPR003661">
    <property type="entry name" value="HisK_dim/P_dom"/>
</dbReference>
<dbReference type="InterPro" id="IPR036097">
    <property type="entry name" value="HisK_dim/P_sf"/>
</dbReference>
<dbReference type="InterPro" id="IPR004358">
    <property type="entry name" value="Sig_transdc_His_kin-like_C"/>
</dbReference>
<dbReference type="InterPro" id="IPR001789">
    <property type="entry name" value="Sig_transdc_resp-reg_receiver"/>
</dbReference>
<dbReference type="PANTHER" id="PTHR43719:SF75">
    <property type="entry name" value="HISTIDINE KINASE CKI1"/>
    <property type="match status" value="1"/>
</dbReference>
<dbReference type="PANTHER" id="PTHR43719">
    <property type="entry name" value="TWO-COMPONENT HISTIDINE KINASE"/>
    <property type="match status" value="1"/>
</dbReference>
<dbReference type="Pfam" id="PF02518">
    <property type="entry name" value="HATPase_c"/>
    <property type="match status" value="1"/>
</dbReference>
<dbReference type="Pfam" id="PF00512">
    <property type="entry name" value="HisKA"/>
    <property type="match status" value="1"/>
</dbReference>
<dbReference type="Pfam" id="PF00072">
    <property type="entry name" value="Response_reg"/>
    <property type="match status" value="1"/>
</dbReference>
<dbReference type="PRINTS" id="PR00344">
    <property type="entry name" value="BCTRLSENSOR"/>
</dbReference>
<dbReference type="SMART" id="SM00387">
    <property type="entry name" value="HATPase_c"/>
    <property type="match status" value="1"/>
</dbReference>
<dbReference type="SMART" id="SM00388">
    <property type="entry name" value="HisKA"/>
    <property type="match status" value="1"/>
</dbReference>
<dbReference type="SMART" id="SM00448">
    <property type="entry name" value="REC"/>
    <property type="match status" value="1"/>
</dbReference>
<dbReference type="SUPFAM" id="SSF55874">
    <property type="entry name" value="ATPase domain of HSP90 chaperone/DNA topoisomerase II/histidine kinase"/>
    <property type="match status" value="1"/>
</dbReference>
<dbReference type="SUPFAM" id="SSF52172">
    <property type="entry name" value="CheY-like"/>
    <property type="match status" value="1"/>
</dbReference>
<dbReference type="SUPFAM" id="SSF47384">
    <property type="entry name" value="Homodimeric domain of signal transducing histidine kinase"/>
    <property type="match status" value="1"/>
</dbReference>
<dbReference type="PROSITE" id="PS50109">
    <property type="entry name" value="HIS_KIN"/>
    <property type="match status" value="1"/>
</dbReference>
<dbReference type="PROSITE" id="PS50110">
    <property type="entry name" value="RESPONSE_REGULATORY"/>
    <property type="match status" value="1"/>
</dbReference>
<proteinExistence type="evidence at transcript level"/>
<sequence>MREVEEVSKWRRRCCYFWILFPLAVIATCMTITVVTFCSSTMYMTEVMGEATKGAMDSALMHIAGNMRPLLEANRSVFTIANTLHVQGNMASFSHVGPKLFLAFSMQPLQAQISYAAVDGAAFAYYRAGGGDGEARAMFARPNGTWFTQAVDPATGRPVGNATAAAPHQQLPPNVTRLLLDGGGGGASLADGWARPGVRMLFLSAPVGGGGGAVSAAVAVDDVVLRGAAGLRQLRDLGMYYAVAGNGGATAAPPAPEPAAYRSLLGDGAAAEEMALFSSVKCTASAIDAPPKLDVHGVKSDKYRFACTNFDISGVQMGFRVVLRKSAMVGVFRRGGVTMVAVACAAAAAATVACVLMARALRRAVAREAALGADLARHRDALRQAERKSMNKSNAFASASHDIRSALAAVAGLVEVSRPEANPNIVDNLNQMELCTNKLLDILNSILDTTKVESGKVQLEEVEFNMADVLEESVDMANVVGITKGIEVIWDPCDFSVMKCDNIIGDSKRFKQILDNLLGNAMKFTQEGHVILRAWANRPIARGSIGAPSRFAYRSLENNFFSFFFGAKEDRVSQNSFNPLQNDPNSVEFYFEVVDTGIGIPKEKRESVFENYVQVKEGHGGTGLGLGIVQSFVRLMGGEISIKEKEPGERGTCFGFNVLLKTSGNQAAEEDIEEGPSTVSELDIRASVFRETNCFKGWHCILFVHGDETRRVLQAWMESIGMKVWMVPGVESISSTLEKARSSRDDCDVDRCFSSKEMVSQVLPTTLRNNNIMARNLGEHHPLGMLLIVDVSNGQLENIQRQARDFTQMRSQVPCKFVCLTDLRTSYKDFRRFEEMSCDLILRKPVHGSRLYSLLMTLRDVQSSPMHRSSLVGHENYVTRHQDSANIVALAEVGRLDQGLKTEEDRPLDGMHVLLVEDTLVLQTIQRKMLNQLGAIVELAGDGAKAVDMFRDAIERASVSEEHSVPLPYDVIFMDCQMPRMDGYEATRRIREEESRYGIRTPIIALTAHSMEDDLQKAIDVGMDLHMTKPIERRRIVEAVHGVCKGKN</sequence>
<name>OHK2_ORYSJ</name>
<feature type="chain" id="PRO_0000433805" description="Probable histidine kinase 2">
    <location>
        <begin position="1"/>
        <end position="1048"/>
    </location>
</feature>
<feature type="topological domain" description="Cytoplasmic" evidence="10">
    <location>
        <begin position="1"/>
        <end position="16"/>
    </location>
</feature>
<feature type="transmembrane region" description="Helical" evidence="2">
    <location>
        <begin position="17"/>
        <end position="37"/>
    </location>
</feature>
<feature type="topological domain" description="Extracellular" evidence="10">
    <location>
        <begin position="38"/>
        <end position="336"/>
    </location>
</feature>
<feature type="transmembrane region" description="Helical" evidence="2">
    <location>
        <begin position="337"/>
        <end position="357"/>
    </location>
</feature>
<feature type="topological domain" description="Cytoplasmic" evidence="10">
    <location>
        <begin position="358"/>
        <end position="1048"/>
    </location>
</feature>
<feature type="domain" description="Histidine kinase" evidence="3">
    <location>
        <begin position="398"/>
        <end position="662"/>
    </location>
</feature>
<feature type="domain" description="Response regulatory" evidence="4">
    <location>
        <begin position="912"/>
        <end position="1044"/>
    </location>
</feature>
<feature type="modified residue" description="Phosphohistidine; by autocatalysis" evidence="3">
    <location>
        <position position="401"/>
    </location>
</feature>
<feature type="modified residue" description="4-aspartylphosphate" evidence="4">
    <location>
        <position position="975"/>
    </location>
</feature>
<protein>
    <recommendedName>
        <fullName evidence="10">Probable histidine kinase 2</fullName>
        <shortName evidence="7">OsHK2</shortName>
        <ecNumber evidence="10">2.7.13.3</ecNumber>
    </recommendedName>
</protein>
<keyword id="KW-1003">Cell membrane</keyword>
<keyword id="KW-0932">Cytokinin signaling pathway</keyword>
<keyword id="KW-0418">Kinase</keyword>
<keyword id="KW-0472">Membrane</keyword>
<keyword id="KW-0597">Phosphoprotein</keyword>
<keyword id="KW-1185">Reference proteome</keyword>
<keyword id="KW-0808">Transferase</keyword>
<keyword id="KW-0812">Transmembrane</keyword>
<keyword id="KW-1133">Transmembrane helix</keyword>
<keyword id="KW-0902">Two-component regulatory system</keyword>